<organism>
    <name type="scientific">Oryza sativa subsp. japonica</name>
    <name type="common">Rice</name>
    <dbReference type="NCBI Taxonomy" id="39947"/>
    <lineage>
        <taxon>Eukaryota</taxon>
        <taxon>Viridiplantae</taxon>
        <taxon>Streptophyta</taxon>
        <taxon>Embryophyta</taxon>
        <taxon>Tracheophyta</taxon>
        <taxon>Spermatophyta</taxon>
        <taxon>Magnoliopsida</taxon>
        <taxon>Liliopsida</taxon>
        <taxon>Poales</taxon>
        <taxon>Poaceae</taxon>
        <taxon>BOP clade</taxon>
        <taxon>Oryzoideae</taxon>
        <taxon>Oryzeae</taxon>
        <taxon>Oryzinae</taxon>
        <taxon>Oryza</taxon>
        <taxon>Oryza sativa</taxon>
    </lineage>
</organism>
<gene>
    <name type="primary">LAC22</name>
    <name type="ordered locus">Os11g0708100</name>
    <name type="ordered locus">LOC_Os11g48060</name>
    <name type="ORF">OsJ_033548</name>
</gene>
<comment type="function">
    <text evidence="1">Lignin degradation and detoxification of lignin-derived products.</text>
</comment>
<comment type="catalytic activity">
    <reaction>
        <text>4 hydroquinone + O2 = 4 benzosemiquinone + 2 H2O</text>
        <dbReference type="Rhea" id="RHEA:11276"/>
        <dbReference type="ChEBI" id="CHEBI:15377"/>
        <dbReference type="ChEBI" id="CHEBI:15379"/>
        <dbReference type="ChEBI" id="CHEBI:17594"/>
        <dbReference type="ChEBI" id="CHEBI:17977"/>
        <dbReference type="EC" id="1.10.3.2"/>
    </reaction>
</comment>
<comment type="cofactor">
    <cofactor evidence="1">
        <name>Cu cation</name>
        <dbReference type="ChEBI" id="CHEBI:23378"/>
    </cofactor>
    <text evidence="1">Binds 4 Cu cations per monomer.</text>
</comment>
<comment type="subcellular location">
    <subcellularLocation>
        <location evidence="3">Secreted</location>
        <location evidence="3">Extracellular space</location>
        <location evidence="3">Apoplast</location>
    </subcellularLocation>
</comment>
<comment type="similarity">
    <text evidence="3">Belongs to the multicopper oxidase family.</text>
</comment>
<comment type="sequence caution" evidence="3">
    <conflict type="erroneous gene model prediction">
        <sequence resource="EMBL-CDS" id="BAF28924"/>
    </conflict>
</comment>
<proteinExistence type="evidence at transcript level"/>
<evidence type="ECO:0000250" key="1"/>
<evidence type="ECO:0000255" key="2"/>
<evidence type="ECO:0000305" key="3"/>
<dbReference type="EC" id="1.10.3.2"/>
<dbReference type="EMBL" id="AC133008">
    <property type="protein sequence ID" value="AAX95423.1"/>
    <property type="molecule type" value="Genomic_DNA"/>
</dbReference>
<dbReference type="EMBL" id="DP000010">
    <property type="protein sequence ID" value="ABA95532.1"/>
    <property type="molecule type" value="Genomic_DNA"/>
</dbReference>
<dbReference type="EMBL" id="AP008217">
    <property type="protein sequence ID" value="BAF28924.1"/>
    <property type="status" value="ALT_SEQ"/>
    <property type="molecule type" value="Genomic_DNA"/>
</dbReference>
<dbReference type="EMBL" id="AP014967">
    <property type="status" value="NOT_ANNOTATED_CDS"/>
    <property type="molecule type" value="Genomic_DNA"/>
</dbReference>
<dbReference type="EMBL" id="CM000148">
    <property type="protein sequence ID" value="EAZ19339.1"/>
    <property type="molecule type" value="Genomic_DNA"/>
</dbReference>
<dbReference type="SMR" id="Q0IQU1"/>
<dbReference type="FunCoup" id="Q0IQU1">
    <property type="interactions" value="10"/>
</dbReference>
<dbReference type="STRING" id="39947.Q0IQU1"/>
<dbReference type="GlyCosmos" id="Q0IQU1">
    <property type="glycosylation" value="11 sites, No reported glycans"/>
</dbReference>
<dbReference type="PaxDb" id="39947-Q0IQU1"/>
<dbReference type="eggNOG" id="KOG1263">
    <property type="taxonomic scope" value="Eukaryota"/>
</dbReference>
<dbReference type="InParanoid" id="Q0IQU1"/>
<dbReference type="Proteomes" id="UP000000763">
    <property type="component" value="Chromosome 11"/>
</dbReference>
<dbReference type="Proteomes" id="UP000007752">
    <property type="component" value="Chromosome 11"/>
</dbReference>
<dbReference type="Proteomes" id="UP000059680">
    <property type="component" value="Chromosome 11"/>
</dbReference>
<dbReference type="GO" id="GO:0048046">
    <property type="term" value="C:apoplast"/>
    <property type="evidence" value="ECO:0007669"/>
    <property type="project" value="UniProtKB-SubCell"/>
</dbReference>
<dbReference type="GO" id="GO:0005507">
    <property type="term" value="F:copper ion binding"/>
    <property type="evidence" value="ECO:0007669"/>
    <property type="project" value="InterPro"/>
</dbReference>
<dbReference type="GO" id="GO:0052716">
    <property type="term" value="F:hydroquinone:oxygen oxidoreductase activity"/>
    <property type="evidence" value="ECO:0007669"/>
    <property type="project" value="UniProtKB-EC"/>
</dbReference>
<dbReference type="GO" id="GO:0016491">
    <property type="term" value="F:oxidoreductase activity"/>
    <property type="evidence" value="ECO:0000318"/>
    <property type="project" value="GO_Central"/>
</dbReference>
<dbReference type="GO" id="GO:0046274">
    <property type="term" value="P:lignin catabolic process"/>
    <property type="evidence" value="ECO:0007669"/>
    <property type="project" value="UniProtKB-KW"/>
</dbReference>
<dbReference type="CDD" id="cd13849">
    <property type="entry name" value="CuRO_1_LCC_plant"/>
    <property type="match status" value="1"/>
</dbReference>
<dbReference type="CDD" id="cd13875">
    <property type="entry name" value="CuRO_2_LCC_plant"/>
    <property type="match status" value="1"/>
</dbReference>
<dbReference type="CDD" id="cd13897">
    <property type="entry name" value="CuRO_3_LCC_plant"/>
    <property type="match status" value="1"/>
</dbReference>
<dbReference type="FunFam" id="2.60.40.420:FF:000049">
    <property type="entry name" value="Laccase"/>
    <property type="match status" value="1"/>
</dbReference>
<dbReference type="FunFam" id="2.60.40.420:FF:000062">
    <property type="entry name" value="Laccase"/>
    <property type="match status" value="1"/>
</dbReference>
<dbReference type="Gene3D" id="2.60.40.420">
    <property type="entry name" value="Cupredoxins - blue copper proteins"/>
    <property type="match status" value="3"/>
</dbReference>
<dbReference type="InterPro" id="IPR011707">
    <property type="entry name" value="Cu-oxidase-like_N"/>
</dbReference>
<dbReference type="InterPro" id="IPR001117">
    <property type="entry name" value="Cu-oxidase_2nd"/>
</dbReference>
<dbReference type="InterPro" id="IPR011706">
    <property type="entry name" value="Cu-oxidase_C"/>
</dbReference>
<dbReference type="InterPro" id="IPR045087">
    <property type="entry name" value="Cu-oxidase_fam"/>
</dbReference>
<dbReference type="InterPro" id="IPR033138">
    <property type="entry name" value="Cu_oxidase_CS"/>
</dbReference>
<dbReference type="InterPro" id="IPR002355">
    <property type="entry name" value="Cu_oxidase_Cu_BS"/>
</dbReference>
<dbReference type="InterPro" id="IPR008972">
    <property type="entry name" value="Cupredoxin"/>
</dbReference>
<dbReference type="InterPro" id="IPR034288">
    <property type="entry name" value="CuRO_1_LCC"/>
</dbReference>
<dbReference type="InterPro" id="IPR034285">
    <property type="entry name" value="CuRO_2_LCC"/>
</dbReference>
<dbReference type="InterPro" id="IPR034289">
    <property type="entry name" value="CuRO_3_LCC"/>
</dbReference>
<dbReference type="InterPro" id="IPR017761">
    <property type="entry name" value="Laccase"/>
</dbReference>
<dbReference type="NCBIfam" id="TIGR03389">
    <property type="entry name" value="laccase"/>
    <property type="match status" value="1"/>
</dbReference>
<dbReference type="PANTHER" id="PTHR11709:SF370">
    <property type="entry name" value="LACCASE-4"/>
    <property type="match status" value="1"/>
</dbReference>
<dbReference type="PANTHER" id="PTHR11709">
    <property type="entry name" value="MULTI-COPPER OXIDASE"/>
    <property type="match status" value="1"/>
</dbReference>
<dbReference type="Pfam" id="PF00394">
    <property type="entry name" value="Cu-oxidase"/>
    <property type="match status" value="1"/>
</dbReference>
<dbReference type="Pfam" id="PF07731">
    <property type="entry name" value="Cu-oxidase_2"/>
    <property type="match status" value="1"/>
</dbReference>
<dbReference type="Pfam" id="PF07732">
    <property type="entry name" value="Cu-oxidase_3"/>
    <property type="match status" value="1"/>
</dbReference>
<dbReference type="SUPFAM" id="SSF49503">
    <property type="entry name" value="Cupredoxins"/>
    <property type="match status" value="3"/>
</dbReference>
<dbReference type="PROSITE" id="PS00079">
    <property type="entry name" value="MULTICOPPER_OXIDASE1"/>
    <property type="match status" value="1"/>
</dbReference>
<dbReference type="PROSITE" id="PS00080">
    <property type="entry name" value="MULTICOPPER_OXIDASE2"/>
    <property type="match status" value="1"/>
</dbReference>
<name>LAC22_ORYSJ</name>
<reference key="1">
    <citation type="journal article" date="2005" name="BMC Biol.">
        <title>The sequence of rice chromosomes 11 and 12, rich in disease resistance genes and recent gene duplications.</title>
        <authorList>
            <consortium name="The rice chromosomes 11 and 12 sequencing consortia"/>
        </authorList>
    </citation>
    <scope>NUCLEOTIDE SEQUENCE [LARGE SCALE GENOMIC DNA]</scope>
    <source>
        <strain>cv. Nipponbare</strain>
    </source>
</reference>
<reference key="2">
    <citation type="journal article" date="2005" name="Nature">
        <title>The map-based sequence of the rice genome.</title>
        <authorList>
            <consortium name="International rice genome sequencing project (IRGSP)"/>
        </authorList>
    </citation>
    <scope>NUCLEOTIDE SEQUENCE [LARGE SCALE GENOMIC DNA]</scope>
    <source>
        <strain>cv. Nipponbare</strain>
    </source>
</reference>
<reference key="3">
    <citation type="journal article" date="2008" name="Nucleic Acids Res.">
        <title>The rice annotation project database (RAP-DB): 2008 update.</title>
        <authorList>
            <consortium name="The rice annotation project (RAP)"/>
        </authorList>
    </citation>
    <scope>GENOME REANNOTATION</scope>
    <source>
        <strain>cv. Nipponbare</strain>
    </source>
</reference>
<reference key="4">
    <citation type="journal article" date="2013" name="Rice">
        <title>Improvement of the Oryza sativa Nipponbare reference genome using next generation sequence and optical map data.</title>
        <authorList>
            <person name="Kawahara Y."/>
            <person name="de la Bastide M."/>
            <person name="Hamilton J.P."/>
            <person name="Kanamori H."/>
            <person name="McCombie W.R."/>
            <person name="Ouyang S."/>
            <person name="Schwartz D.C."/>
            <person name="Tanaka T."/>
            <person name="Wu J."/>
            <person name="Zhou S."/>
            <person name="Childs K.L."/>
            <person name="Davidson R.M."/>
            <person name="Lin H."/>
            <person name="Quesada-Ocampo L."/>
            <person name="Vaillancourt B."/>
            <person name="Sakai H."/>
            <person name="Lee S.S."/>
            <person name="Kim J."/>
            <person name="Numa H."/>
            <person name="Itoh T."/>
            <person name="Buell C.R."/>
            <person name="Matsumoto T."/>
        </authorList>
    </citation>
    <scope>GENOME REANNOTATION</scope>
    <source>
        <strain>cv. Nipponbare</strain>
    </source>
</reference>
<reference key="5">
    <citation type="journal article" date="2005" name="PLoS Biol.">
        <title>The genomes of Oryza sativa: a history of duplications.</title>
        <authorList>
            <person name="Yu J."/>
            <person name="Wang J."/>
            <person name="Lin W."/>
            <person name="Li S."/>
            <person name="Li H."/>
            <person name="Zhou J."/>
            <person name="Ni P."/>
            <person name="Dong W."/>
            <person name="Hu S."/>
            <person name="Zeng C."/>
            <person name="Zhang J."/>
            <person name="Zhang Y."/>
            <person name="Li R."/>
            <person name="Xu Z."/>
            <person name="Li S."/>
            <person name="Li X."/>
            <person name="Zheng H."/>
            <person name="Cong L."/>
            <person name="Lin L."/>
            <person name="Yin J."/>
            <person name="Geng J."/>
            <person name="Li G."/>
            <person name="Shi J."/>
            <person name="Liu J."/>
            <person name="Lv H."/>
            <person name="Li J."/>
            <person name="Wang J."/>
            <person name="Deng Y."/>
            <person name="Ran L."/>
            <person name="Shi X."/>
            <person name="Wang X."/>
            <person name="Wu Q."/>
            <person name="Li C."/>
            <person name="Ren X."/>
            <person name="Wang J."/>
            <person name="Wang X."/>
            <person name="Li D."/>
            <person name="Liu D."/>
            <person name="Zhang X."/>
            <person name="Ji Z."/>
            <person name="Zhao W."/>
            <person name="Sun Y."/>
            <person name="Zhang Z."/>
            <person name="Bao J."/>
            <person name="Han Y."/>
            <person name="Dong L."/>
            <person name="Ji J."/>
            <person name="Chen P."/>
            <person name="Wu S."/>
            <person name="Liu J."/>
            <person name="Xiao Y."/>
            <person name="Bu D."/>
            <person name="Tan J."/>
            <person name="Yang L."/>
            <person name="Ye C."/>
            <person name="Zhang J."/>
            <person name="Xu J."/>
            <person name="Zhou Y."/>
            <person name="Yu Y."/>
            <person name="Zhang B."/>
            <person name="Zhuang S."/>
            <person name="Wei H."/>
            <person name="Liu B."/>
            <person name="Lei M."/>
            <person name="Yu H."/>
            <person name="Li Y."/>
            <person name="Xu H."/>
            <person name="Wei S."/>
            <person name="He X."/>
            <person name="Fang L."/>
            <person name="Zhang Z."/>
            <person name="Zhang Y."/>
            <person name="Huang X."/>
            <person name="Su Z."/>
            <person name="Tong W."/>
            <person name="Li J."/>
            <person name="Tong Z."/>
            <person name="Li S."/>
            <person name="Ye J."/>
            <person name="Wang L."/>
            <person name="Fang L."/>
            <person name="Lei T."/>
            <person name="Chen C.-S."/>
            <person name="Chen H.-C."/>
            <person name="Xu Z."/>
            <person name="Li H."/>
            <person name="Huang H."/>
            <person name="Zhang F."/>
            <person name="Xu H."/>
            <person name="Li N."/>
            <person name="Zhao C."/>
            <person name="Li S."/>
            <person name="Dong L."/>
            <person name="Huang Y."/>
            <person name="Li L."/>
            <person name="Xi Y."/>
            <person name="Qi Q."/>
            <person name="Li W."/>
            <person name="Zhang B."/>
            <person name="Hu W."/>
            <person name="Zhang Y."/>
            <person name="Tian X."/>
            <person name="Jiao Y."/>
            <person name="Liang X."/>
            <person name="Jin J."/>
            <person name="Gao L."/>
            <person name="Zheng W."/>
            <person name="Hao B."/>
            <person name="Liu S.-M."/>
            <person name="Wang W."/>
            <person name="Yuan L."/>
            <person name="Cao M."/>
            <person name="McDermott J."/>
            <person name="Samudrala R."/>
            <person name="Wang J."/>
            <person name="Wong G.K.-S."/>
            <person name="Yang H."/>
        </authorList>
    </citation>
    <scope>NUCLEOTIDE SEQUENCE [LARGE SCALE GENOMIC DNA]</scope>
    <source>
        <strain>cv. Nipponbare</strain>
    </source>
</reference>
<protein>
    <recommendedName>
        <fullName>Laccase-22</fullName>
        <ecNumber>1.10.3.2</ecNumber>
    </recommendedName>
    <alternativeName>
        <fullName>Benzenediol:oxygen oxidoreductase 22</fullName>
    </alternativeName>
    <alternativeName>
        <fullName>Diphenol oxidase 22</fullName>
    </alternativeName>
    <alternativeName>
        <fullName>Urishiol oxidase 22</fullName>
    </alternativeName>
</protein>
<feature type="signal peptide" evidence="2">
    <location>
        <begin position="1"/>
        <end position="25"/>
    </location>
</feature>
<feature type="chain" id="PRO_0000291909" description="Laccase-22">
    <location>
        <begin position="26"/>
        <end position="564"/>
    </location>
</feature>
<feature type="domain" description="Plastocyanin-like 1">
    <location>
        <begin position="36"/>
        <end position="152"/>
    </location>
</feature>
<feature type="domain" description="Plastocyanin-like 2">
    <location>
        <begin position="162"/>
        <end position="314"/>
    </location>
</feature>
<feature type="domain" description="Plastocyanin-like 3">
    <location>
        <begin position="414"/>
        <end position="548"/>
    </location>
</feature>
<feature type="binding site" evidence="1">
    <location>
        <position position="86"/>
    </location>
    <ligand>
        <name>Cu cation</name>
        <dbReference type="ChEBI" id="CHEBI:23378"/>
        <label>1</label>
    </ligand>
</feature>
<feature type="binding site" evidence="1">
    <location>
        <position position="88"/>
    </location>
    <ligand>
        <name>Cu cation</name>
        <dbReference type="ChEBI" id="CHEBI:23378"/>
        <label>2</label>
    </ligand>
</feature>
<feature type="binding site" evidence="1">
    <location>
        <position position="131"/>
    </location>
    <ligand>
        <name>Cu cation</name>
        <dbReference type="ChEBI" id="CHEBI:23378"/>
        <label>2</label>
    </ligand>
</feature>
<feature type="binding site" evidence="1">
    <location>
        <position position="133"/>
    </location>
    <ligand>
        <name>Cu cation</name>
        <dbReference type="ChEBI" id="CHEBI:23378"/>
        <label>3</label>
    </ligand>
</feature>
<feature type="binding site" evidence="1">
    <location>
        <position position="465"/>
    </location>
    <ligand>
        <name>Cu cation</name>
        <dbReference type="ChEBI" id="CHEBI:23378"/>
        <label>4</label>
    </ligand>
</feature>
<feature type="binding site" evidence="1">
    <location>
        <position position="468"/>
    </location>
    <ligand>
        <name>Cu cation</name>
        <dbReference type="ChEBI" id="CHEBI:23378"/>
        <label>1</label>
    </ligand>
</feature>
<feature type="binding site" evidence="1">
    <location>
        <position position="470"/>
    </location>
    <ligand>
        <name>Cu cation</name>
        <dbReference type="ChEBI" id="CHEBI:23378"/>
        <label>3</label>
    </ligand>
</feature>
<feature type="binding site" evidence="1">
    <location>
        <position position="527"/>
    </location>
    <ligand>
        <name>Cu cation</name>
        <dbReference type="ChEBI" id="CHEBI:23378"/>
        <label>3</label>
    </ligand>
</feature>
<feature type="binding site" evidence="1">
    <location>
        <position position="528"/>
    </location>
    <ligand>
        <name>Cu cation</name>
        <dbReference type="ChEBI" id="CHEBI:23378"/>
        <label>4</label>
    </ligand>
</feature>
<feature type="binding site" evidence="1">
    <location>
        <position position="529"/>
    </location>
    <ligand>
        <name>Cu cation</name>
        <dbReference type="ChEBI" id="CHEBI:23378"/>
        <label>2</label>
    </ligand>
</feature>
<feature type="binding site" evidence="1">
    <location>
        <position position="533"/>
    </location>
    <ligand>
        <name>Cu cation</name>
        <dbReference type="ChEBI" id="CHEBI:23378"/>
        <label>4</label>
    </ligand>
</feature>
<feature type="glycosylation site" description="N-linked (GlcNAc...) asparagine" evidence="2">
    <location>
        <position position="41"/>
    </location>
</feature>
<feature type="glycosylation site" description="N-linked (GlcNAc...) asparagine" evidence="2">
    <location>
        <position position="82"/>
    </location>
</feature>
<feature type="glycosylation site" description="N-linked (GlcNAc...) asparagine" evidence="2">
    <location>
        <position position="118"/>
    </location>
</feature>
<feature type="glycosylation site" description="N-linked (GlcNAc...) asparagine" evidence="2">
    <location>
        <position position="191"/>
    </location>
</feature>
<feature type="glycosylation site" description="N-linked (GlcNAc...) asparagine" evidence="2">
    <location>
        <position position="302"/>
    </location>
</feature>
<feature type="glycosylation site" description="N-linked (GlcNAc...) asparagine" evidence="2">
    <location>
        <position position="331"/>
    </location>
</feature>
<feature type="glycosylation site" description="N-linked (GlcNAc...) asparagine" evidence="2">
    <location>
        <position position="379"/>
    </location>
</feature>
<feature type="glycosylation site" description="N-linked (GlcNAc...) asparagine" evidence="2">
    <location>
        <position position="389"/>
    </location>
</feature>
<feature type="glycosylation site" description="N-linked (GlcNAc...) asparagine" evidence="2">
    <location>
        <position position="424"/>
    </location>
</feature>
<feature type="glycosylation site" description="N-linked (GlcNAc...) asparagine" evidence="2">
    <location>
        <position position="437"/>
    </location>
</feature>
<feature type="glycosylation site" description="N-linked (GlcNAc...) asparagine" evidence="2">
    <location>
        <position position="447"/>
    </location>
</feature>
<keyword id="KW-0052">Apoplast</keyword>
<keyword id="KW-0186">Copper</keyword>
<keyword id="KW-0325">Glycoprotein</keyword>
<keyword id="KW-0439">Lignin degradation</keyword>
<keyword id="KW-0479">Metal-binding</keyword>
<keyword id="KW-0560">Oxidoreductase</keyword>
<keyword id="KW-1185">Reference proteome</keyword>
<keyword id="KW-0677">Repeat</keyword>
<keyword id="KW-0964">Secreted</keyword>
<keyword id="KW-0732">Signal</keyword>
<sequence>MAVLPESRRLSLLLMAACFLLQALSAHAITRHYKFNVVMRNMTRLCSTKPILTVNGKFPGPTLYAREGDNVLVKVVNHVAHNVTIHWHGVRQIRTGWYDGPAYITQCPIQPGSSFLYNFTITGQRGTLLWHAHINWLRATVHGAIVILPKLGVPYPFPAPHKEAVIVLGEWWKEDTETVINQAMQLGVGPNISDSHTINGHPGPLSECASSQDGFKLSVENGKTYMLRIINAALNDDLFFKVAGHELTVVEVDAVYTKPFKTDTLLITPGQTTNVLVRANQGAGRYLLSVSPFMDAPVQVDNKTGTATLHYANTVSSSMASLTLVKPPPQNATHIVSKFTDSLHSLNSKEYPANVPQTVDHSLLLTVGVGVNPCPSCINGTRVVGTINNVTFIMPSTPILQAHYYNIPGVFTEDFPATPLHKFNYTGSGPKNLQTMNGTRVYRLPYNASVQVVLQDTGIISPESHPIHLHGFNFFVVGKGVGNYNPRTSPSTFNLIDPIERNTIGVPTGGWTAIRFRSDNPGVWFMHCHFEVHTSWGLKMAFVVDNGKRPSETLIPPPKDLPQC</sequence>
<accession>Q0IQU1</accession>
<accession>Q53NW2</accession>